<keyword id="KW-0106">Calcium</keyword>
<keyword id="KW-0479">Metal-binding</keyword>
<keyword id="KW-1185">Reference proteome</keyword>
<keyword id="KW-0677">Repeat</keyword>
<name>CAST_SOLTU</name>
<proteinExistence type="evidence at transcript level"/>
<reference key="1">
    <citation type="journal article" date="1993" name="Plant Physiol.">
        <title>Identification of a cDNA clone coding for a novel calcium-binding protein from potato tuber.</title>
        <authorList>
            <person name="Gellatly K.S."/>
            <person name="Lefebvre D.D."/>
        </authorList>
    </citation>
    <scope>NUCLEOTIDE SEQUENCE [MRNA]</scope>
    <source>
        <strain>cv. Kennebec</strain>
        <tissue>Tuber</tissue>
    </source>
</reference>
<protein>
    <recommendedName>
        <fullName>Calcium-binding protein CAST</fullName>
    </recommendedName>
</protein>
<comment type="function">
    <text>Not known. Probably binds 3 calcium ions.</text>
</comment>
<feature type="chain" id="PRO_0000073661" description="Calcium-binding protein CAST">
    <location>
        <begin position="1"/>
        <end position="199"/>
    </location>
</feature>
<feature type="domain" description="EF-hand 1" evidence="1">
    <location>
        <begin position="36"/>
        <end position="71"/>
    </location>
</feature>
<feature type="domain" description="EF-hand 2" evidence="3">
    <location>
        <begin position="75"/>
        <end position="110"/>
    </location>
</feature>
<feature type="domain" description="EF-hand 3" evidence="1">
    <location>
        <begin position="125"/>
        <end position="160"/>
    </location>
</feature>
<feature type="domain" description="EF-hand 4" evidence="1">
    <location>
        <begin position="163"/>
        <end position="198"/>
    </location>
</feature>
<feature type="region of interest" description="Disordered" evidence="2">
    <location>
        <begin position="1"/>
        <end position="31"/>
    </location>
</feature>
<feature type="compositionally biased region" description="Basic and acidic residues" evidence="2">
    <location>
        <begin position="1"/>
        <end position="13"/>
    </location>
</feature>
<feature type="binding site" evidence="3">
    <location>
        <position position="49"/>
    </location>
    <ligand>
        <name>Ca(2+)</name>
        <dbReference type="ChEBI" id="CHEBI:29108"/>
    </ligand>
</feature>
<feature type="binding site" evidence="3">
    <location>
        <position position="51"/>
    </location>
    <ligand>
        <name>Ca(2+)</name>
        <dbReference type="ChEBI" id="CHEBI:29108"/>
    </ligand>
</feature>
<feature type="binding site" evidence="3">
    <location>
        <position position="53"/>
    </location>
    <ligand>
        <name>Ca(2+)</name>
        <dbReference type="ChEBI" id="CHEBI:29108"/>
    </ligand>
</feature>
<feature type="binding site" evidence="3">
    <location>
        <position position="60"/>
    </location>
    <ligand>
        <name>Ca(2+)</name>
        <dbReference type="ChEBI" id="CHEBI:29108"/>
    </ligand>
</feature>
<feature type="binding site" evidence="1">
    <location>
        <position position="138"/>
    </location>
    <ligand>
        <name>Ca(2+)</name>
        <dbReference type="ChEBI" id="CHEBI:29108"/>
    </ligand>
</feature>
<feature type="binding site" evidence="1">
    <location>
        <position position="140"/>
    </location>
    <ligand>
        <name>Ca(2+)</name>
        <dbReference type="ChEBI" id="CHEBI:29108"/>
    </ligand>
</feature>
<feature type="binding site" evidence="1">
    <location>
        <position position="142"/>
    </location>
    <ligand>
        <name>Ca(2+)</name>
        <dbReference type="ChEBI" id="CHEBI:29108"/>
    </ligand>
</feature>
<feature type="binding site" evidence="1">
    <location>
        <position position="149"/>
    </location>
    <ligand>
        <name>Ca(2+)</name>
        <dbReference type="ChEBI" id="CHEBI:29108"/>
    </ligand>
</feature>
<feature type="binding site" evidence="3">
    <location>
        <position position="178"/>
    </location>
    <ligand>
        <name>Ca(2+)</name>
        <dbReference type="ChEBI" id="CHEBI:29108"/>
    </ligand>
</feature>
<feature type="binding site" evidence="3">
    <location>
        <position position="180"/>
    </location>
    <ligand>
        <name>Ca(2+)</name>
        <dbReference type="ChEBI" id="CHEBI:29108"/>
    </ligand>
</feature>
<feature type="binding site" evidence="3">
    <location>
        <position position="182"/>
    </location>
    <ligand>
        <name>Ca(2+)</name>
        <dbReference type="ChEBI" id="CHEBI:29108"/>
    </ligand>
</feature>
<feature type="binding site" evidence="3">
    <location>
        <position position="187"/>
    </location>
    <ligand>
        <name>Ca(2+)</name>
        <dbReference type="ChEBI" id="CHEBI:29108"/>
    </ligand>
</feature>
<organism>
    <name type="scientific">Solanum tuberosum</name>
    <name type="common">Potato</name>
    <dbReference type="NCBI Taxonomy" id="4113"/>
    <lineage>
        <taxon>Eukaryota</taxon>
        <taxon>Viridiplantae</taxon>
        <taxon>Streptophyta</taxon>
        <taxon>Embryophyta</taxon>
        <taxon>Tracheophyta</taxon>
        <taxon>Spermatophyta</taxon>
        <taxon>Magnoliopsida</taxon>
        <taxon>eudicotyledons</taxon>
        <taxon>Gunneridae</taxon>
        <taxon>Pentapetalae</taxon>
        <taxon>asterids</taxon>
        <taxon>lamiids</taxon>
        <taxon>Solanales</taxon>
        <taxon>Solanaceae</taxon>
        <taxon>Solanoideae</taxon>
        <taxon>Solaneae</taxon>
        <taxon>Solanum</taxon>
    </lineage>
</organism>
<accession>Q09011</accession>
<evidence type="ECO:0000255" key="1">
    <source>
        <dbReference type="PROSITE-ProRule" id="PRU00448"/>
    </source>
</evidence>
<evidence type="ECO:0000256" key="2">
    <source>
        <dbReference type="SAM" id="MobiDB-lite"/>
    </source>
</evidence>
<evidence type="ECO:0000305" key="3"/>
<sequence>MGSVQDENKDEFKQSLTRGKLKPSSSSSFRLRSPSLNSIRLRRIFDVFDRNHDCLISVEELSQALNLLGLDADLSEIESMVKLHIKPENTGLRFEDFETLHRSLNDVFFGSKCEDKLGLNPDPAQDESDLKEAFDVFDENGDGFISAKELQVVLEKLGLPEGSEIDRVEMMISSVEQDHDGRVDFFEFKDMMRTVIVPS</sequence>
<dbReference type="EMBL" id="L02830">
    <property type="protein sequence ID" value="AAA33811.1"/>
    <property type="molecule type" value="mRNA"/>
</dbReference>
<dbReference type="PIR" id="T07365">
    <property type="entry name" value="T07365"/>
</dbReference>
<dbReference type="SMR" id="Q09011"/>
<dbReference type="FunCoup" id="Q09011">
    <property type="interactions" value="169"/>
</dbReference>
<dbReference type="STRING" id="4113.Q09011"/>
<dbReference type="PaxDb" id="4113-PGSC0003DMT400071219"/>
<dbReference type="eggNOG" id="KOG0027">
    <property type="taxonomic scope" value="Eukaryota"/>
</dbReference>
<dbReference type="InParanoid" id="Q09011"/>
<dbReference type="Proteomes" id="UP000011115">
    <property type="component" value="Unassembled WGS sequence"/>
</dbReference>
<dbReference type="ExpressionAtlas" id="Q09011">
    <property type="expression patterns" value="baseline"/>
</dbReference>
<dbReference type="GO" id="GO:0005509">
    <property type="term" value="F:calcium ion binding"/>
    <property type="evidence" value="ECO:0000318"/>
    <property type="project" value="GO_Central"/>
</dbReference>
<dbReference type="CDD" id="cd00051">
    <property type="entry name" value="EFh"/>
    <property type="match status" value="1"/>
</dbReference>
<dbReference type="FunFam" id="1.10.238.10:FF:000003">
    <property type="entry name" value="Calmodulin A"/>
    <property type="match status" value="1"/>
</dbReference>
<dbReference type="Gene3D" id="1.10.238.10">
    <property type="entry name" value="EF-hand"/>
    <property type="match status" value="2"/>
</dbReference>
<dbReference type="InterPro" id="IPR011992">
    <property type="entry name" value="EF-hand-dom_pair"/>
</dbReference>
<dbReference type="InterPro" id="IPR018247">
    <property type="entry name" value="EF_Hand_1_Ca_BS"/>
</dbReference>
<dbReference type="InterPro" id="IPR002048">
    <property type="entry name" value="EF_hand_dom"/>
</dbReference>
<dbReference type="InterPro" id="IPR039647">
    <property type="entry name" value="EF_hand_pair_protein_CML-like"/>
</dbReference>
<dbReference type="PANTHER" id="PTHR10891">
    <property type="entry name" value="EF-HAND CALCIUM-BINDING DOMAIN CONTAINING PROTEIN"/>
    <property type="match status" value="1"/>
</dbReference>
<dbReference type="Pfam" id="PF13405">
    <property type="entry name" value="EF-hand_6"/>
    <property type="match status" value="1"/>
</dbReference>
<dbReference type="Pfam" id="PF13499">
    <property type="entry name" value="EF-hand_7"/>
    <property type="match status" value="1"/>
</dbReference>
<dbReference type="SMART" id="SM00054">
    <property type="entry name" value="EFh"/>
    <property type="match status" value="3"/>
</dbReference>
<dbReference type="SUPFAM" id="SSF47473">
    <property type="entry name" value="EF-hand"/>
    <property type="match status" value="1"/>
</dbReference>
<dbReference type="PROSITE" id="PS00018">
    <property type="entry name" value="EF_HAND_1"/>
    <property type="match status" value="1"/>
</dbReference>
<dbReference type="PROSITE" id="PS50222">
    <property type="entry name" value="EF_HAND_2"/>
    <property type="match status" value="3"/>
</dbReference>